<protein>
    <recommendedName>
        <fullName>Anthranilate phosphoribosyltransferase, chloroplastic</fullName>
        <ecNumber>2.4.2.18</ecNumber>
    </recommendedName>
</protein>
<keyword id="KW-0028">Amino-acid biosynthesis</keyword>
<keyword id="KW-0057">Aromatic amino acid biosynthesis</keyword>
<keyword id="KW-0150">Chloroplast</keyword>
<keyword id="KW-0328">Glycosyltransferase</keyword>
<keyword id="KW-0460">Magnesium</keyword>
<keyword id="KW-0479">Metal-binding</keyword>
<keyword id="KW-0934">Plastid</keyword>
<keyword id="KW-1185">Reference proteome</keyword>
<keyword id="KW-0808">Transferase</keyword>
<keyword id="KW-0809">Transit peptide</keyword>
<keyword id="KW-0822">Tryptophan biosynthesis</keyword>
<feature type="transit peptide" description="Chloroplast" evidence="2">
    <location>
        <begin position="1"/>
        <end status="unknown"/>
    </location>
</feature>
<feature type="chain" id="PRO_0000035788" description="Anthranilate phosphoribosyltransferase, chloroplastic">
    <location>
        <begin status="unknown"/>
        <end position="444"/>
    </location>
</feature>
<feature type="binding site" evidence="1">
    <location>
        <position position="184"/>
    </location>
    <ligand>
        <name>5-phospho-alpha-D-ribose 1-diphosphate</name>
        <dbReference type="ChEBI" id="CHEBI:58017"/>
    </ligand>
</feature>
<feature type="binding site" evidence="1">
    <location>
        <position position="184"/>
    </location>
    <ligand>
        <name>anthranilate</name>
        <dbReference type="ChEBI" id="CHEBI:16567"/>
        <label>1</label>
    </ligand>
</feature>
<feature type="binding site" evidence="1">
    <location>
        <begin position="187"/>
        <end position="188"/>
    </location>
    <ligand>
        <name>5-phospho-alpha-D-ribose 1-diphosphate</name>
        <dbReference type="ChEBI" id="CHEBI:58017"/>
    </ligand>
</feature>
<feature type="binding site" evidence="1">
    <location>
        <position position="192"/>
    </location>
    <ligand>
        <name>5-phospho-alpha-D-ribose 1-diphosphate</name>
        <dbReference type="ChEBI" id="CHEBI:58017"/>
    </ligand>
</feature>
<feature type="binding site" evidence="1">
    <location>
        <begin position="194"/>
        <end position="197"/>
    </location>
    <ligand>
        <name>5-phospho-alpha-D-ribose 1-diphosphate</name>
        <dbReference type="ChEBI" id="CHEBI:58017"/>
    </ligand>
</feature>
<feature type="binding site" evidence="1">
    <location>
        <position position="196"/>
    </location>
    <ligand>
        <name>Mg(2+)</name>
        <dbReference type="ChEBI" id="CHEBI:18420"/>
        <label>1</label>
    </ligand>
</feature>
<feature type="binding site" evidence="1">
    <location>
        <begin position="212"/>
        <end position="220"/>
    </location>
    <ligand>
        <name>5-phospho-alpha-D-ribose 1-diphosphate</name>
        <dbReference type="ChEBI" id="CHEBI:58017"/>
    </ligand>
</feature>
<feature type="binding site" evidence="1">
    <location>
        <position position="215"/>
    </location>
    <ligand>
        <name>anthranilate</name>
        <dbReference type="ChEBI" id="CHEBI:16567"/>
        <label>1</label>
    </ligand>
</feature>
<feature type="binding site" evidence="1">
    <location>
        <position position="224"/>
    </location>
    <ligand>
        <name>5-phospho-alpha-D-ribose 1-diphosphate</name>
        <dbReference type="ChEBI" id="CHEBI:58017"/>
    </ligand>
</feature>
<feature type="binding site" evidence="1">
    <location>
        <position position="270"/>
    </location>
    <ligand>
        <name>anthranilate</name>
        <dbReference type="ChEBI" id="CHEBI:16567"/>
        <label>2</label>
    </ligand>
</feature>
<feature type="binding site" evidence="1">
    <location>
        <position position="328"/>
    </location>
    <ligand>
        <name>Mg(2+)</name>
        <dbReference type="ChEBI" id="CHEBI:18420"/>
        <label>2</label>
    </ligand>
</feature>
<feature type="binding site" evidence="1">
    <location>
        <position position="329"/>
    </location>
    <ligand>
        <name>Mg(2+)</name>
        <dbReference type="ChEBI" id="CHEBI:18420"/>
        <label>1</label>
    </ligand>
</feature>
<feature type="binding site" evidence="1">
    <location>
        <position position="329"/>
    </location>
    <ligand>
        <name>Mg(2+)</name>
        <dbReference type="ChEBI" id="CHEBI:18420"/>
        <label>2</label>
    </ligand>
</feature>
<feature type="sequence conflict" description="In Ref. 2; AAB02913." evidence="3" ref="2">
    <location>
        <begin position="39"/>
        <end position="41"/>
    </location>
</feature>
<feature type="sequence conflict" description="In Ref. 2; AAB02913." evidence="3" ref="2">
    <original>D</original>
    <variation>H</variation>
    <location>
        <position position="65"/>
    </location>
</feature>
<feature type="sequence conflict" description="In Ref. 2; AAB02913." evidence="3" ref="2">
    <original>ACS</original>
    <variation>VCP</variation>
    <location>
        <begin position="76"/>
        <end position="78"/>
    </location>
</feature>
<feature type="sequence conflict" description="In Ref. 2; AAB02913." evidence="3" ref="2">
    <original>A</original>
    <variation>T</variation>
    <location>
        <position position="89"/>
    </location>
</feature>
<feature type="sequence conflict" description="In Ref. 2; AAB02913." evidence="3" ref="2">
    <original>A</original>
    <variation>E</variation>
    <location>
        <position position="98"/>
    </location>
</feature>
<feature type="sequence conflict" description="In Ref. 2; AAB02913." evidence="3" ref="2">
    <original>T</original>
    <variation>S</variation>
    <location>
        <position position="124"/>
    </location>
</feature>
<feature type="sequence conflict" description="In Ref. 2; AAB02913." evidence="3" ref="2">
    <original>V</original>
    <variation>A</variation>
    <location>
        <position position="234"/>
    </location>
</feature>
<proteinExistence type="evidence at transcript level"/>
<sequence>MVIAVATTSSIVSGIKLSGILTSFNAVDDASSSCGRSNLTGVRIFPTLSRRRFSSIGAVSPIRGDAQSSFSRSSFACSQNLGLSGGFSAAEALPPACANASPSSIKSFNQLIETLIDRVDLSETEAESSLEFLLNEANEALISAFLVLLRAKGETYEEIVGLARAMMKHARKVEGLVDAVDIVGTGGDGANTVNISTGSSILAAACGAKVAKQGNRSSSSACGSADVLEALGVVLDLGPEGIKRCVEEGGIGFMMSPMYHPAMKIVGPVRKKLKIKTVFNILGPMLNPARVSYAVVGVYHKDLVVKMAKALQRFGMKRALVVHSCGLDEMSPLGGGLVYDVTPEKIEEFSFDPLDFGIPRCTLEDLRGGGPDYNADVLRRVLSGESGAIADSLILNAAAALLVSNRVQTLAEGVTVAREVQSSGKAIKTLDSWINISNLAQKSQ</sequence>
<gene>
    <name type="primary">PAT1</name>
    <name type="ordered locus">At5g17990</name>
    <name type="ORF">MCM23.6</name>
</gene>
<comment type="catalytic activity">
    <reaction>
        <text>N-(5-phospho-beta-D-ribosyl)anthranilate + diphosphate = 5-phospho-alpha-D-ribose 1-diphosphate + anthranilate</text>
        <dbReference type="Rhea" id="RHEA:11768"/>
        <dbReference type="ChEBI" id="CHEBI:16567"/>
        <dbReference type="ChEBI" id="CHEBI:18277"/>
        <dbReference type="ChEBI" id="CHEBI:33019"/>
        <dbReference type="ChEBI" id="CHEBI:58017"/>
        <dbReference type="EC" id="2.4.2.18"/>
    </reaction>
</comment>
<comment type="cofactor">
    <cofactor evidence="1">
        <name>Mg(2+)</name>
        <dbReference type="ChEBI" id="CHEBI:18420"/>
    </cofactor>
    <text evidence="1">Binds 2 magnesium ions per monomer.</text>
</comment>
<comment type="pathway">
    <text>Amino-acid biosynthesis; L-tryptophan biosynthesis; L-tryptophan from chorismate: step 2/5.</text>
</comment>
<comment type="subcellular location">
    <subcellularLocation>
        <location evidence="3">Plastid</location>
        <location evidence="3">Chloroplast</location>
    </subcellularLocation>
</comment>
<comment type="similarity">
    <text evidence="3">Belongs to the anthranilate phosphoribosyltransferase family.</text>
</comment>
<organism>
    <name type="scientific">Arabidopsis thaliana</name>
    <name type="common">Mouse-ear cress</name>
    <dbReference type="NCBI Taxonomy" id="3702"/>
    <lineage>
        <taxon>Eukaryota</taxon>
        <taxon>Viridiplantae</taxon>
        <taxon>Streptophyta</taxon>
        <taxon>Embryophyta</taxon>
        <taxon>Tracheophyta</taxon>
        <taxon>Spermatophyta</taxon>
        <taxon>Magnoliopsida</taxon>
        <taxon>eudicotyledons</taxon>
        <taxon>Gunneridae</taxon>
        <taxon>Pentapetalae</taxon>
        <taxon>rosids</taxon>
        <taxon>malvids</taxon>
        <taxon>Brassicales</taxon>
        <taxon>Brassicaceae</taxon>
        <taxon>Camelineae</taxon>
        <taxon>Arabidopsis</taxon>
    </lineage>
</organism>
<evidence type="ECO:0000250" key="1">
    <source>
        <dbReference type="UniProtKB" id="P9WFX5"/>
    </source>
</evidence>
<evidence type="ECO:0000255" key="2"/>
<evidence type="ECO:0000305" key="3"/>
<accession>Q02166</accession>
<accession>Q42557</accession>
<reference key="1">
    <citation type="journal article" date="1992" name="Plant Physiol.">
        <title>A phosphoribosylanthranilate transferase gene is defective in blue fluorescent Arabidopsis thaliana tryptophan mutants.</title>
        <authorList>
            <person name="Rose A.B."/>
            <person name="Casselman A.L."/>
            <person name="Last R.L."/>
        </authorList>
    </citation>
    <scope>NUCLEOTIDE SEQUENCE</scope>
    <source>
        <strain>cv. Columbia</strain>
    </source>
</reference>
<reference key="2">
    <citation type="submission" date="1996-05" db="EMBL/GenBank/DDBJ databases">
        <title>Blue fluorescent trp1 mutants of Arabidopsis thaliana form a discontinuous allelic series.</title>
        <authorList>
            <person name="Rose A.B."/>
            <person name="Li J."/>
            <person name="Last R.L."/>
        </authorList>
    </citation>
    <scope>NUCLEOTIDE SEQUENCE</scope>
    <source>
        <strain>cv. Landsberg erecta</strain>
    </source>
</reference>
<reference key="3">
    <citation type="journal article" date="1998" name="DNA Res.">
        <title>Structural analysis of Arabidopsis thaliana chromosome 5. VII. Sequence features of the regions of 1,013,767 bp covered by sixteen physically assigned P1 and TAC clones.</title>
        <authorList>
            <person name="Nakamura Y."/>
            <person name="Sato S."/>
            <person name="Asamizu E."/>
            <person name="Kaneko T."/>
            <person name="Kotani H."/>
            <person name="Miyajima N."/>
            <person name="Tabata S."/>
        </authorList>
    </citation>
    <scope>NUCLEOTIDE SEQUENCE [LARGE SCALE GENOMIC DNA]</scope>
    <source>
        <strain>cv. Columbia</strain>
    </source>
</reference>
<reference key="4">
    <citation type="journal article" date="2017" name="Plant J.">
        <title>Araport11: a complete reannotation of the Arabidopsis thaliana reference genome.</title>
        <authorList>
            <person name="Cheng C.Y."/>
            <person name="Krishnakumar V."/>
            <person name="Chan A.P."/>
            <person name="Thibaud-Nissen F."/>
            <person name="Schobel S."/>
            <person name="Town C.D."/>
        </authorList>
    </citation>
    <scope>GENOME REANNOTATION</scope>
    <source>
        <strain>cv. Columbia</strain>
    </source>
</reference>
<reference key="5">
    <citation type="journal article" date="2003" name="Science">
        <title>Empirical analysis of transcriptional activity in the Arabidopsis genome.</title>
        <authorList>
            <person name="Yamada K."/>
            <person name="Lim J."/>
            <person name="Dale J.M."/>
            <person name="Chen H."/>
            <person name="Shinn P."/>
            <person name="Palm C.J."/>
            <person name="Southwick A.M."/>
            <person name="Wu H.C."/>
            <person name="Kim C.J."/>
            <person name="Nguyen M."/>
            <person name="Pham P.K."/>
            <person name="Cheuk R.F."/>
            <person name="Karlin-Newmann G."/>
            <person name="Liu S.X."/>
            <person name="Lam B."/>
            <person name="Sakano H."/>
            <person name="Wu T."/>
            <person name="Yu G."/>
            <person name="Miranda M."/>
            <person name="Quach H.L."/>
            <person name="Tripp M."/>
            <person name="Chang C.H."/>
            <person name="Lee J.M."/>
            <person name="Toriumi M.J."/>
            <person name="Chan M.M."/>
            <person name="Tang C.C."/>
            <person name="Onodera C.S."/>
            <person name="Deng J.M."/>
            <person name="Akiyama K."/>
            <person name="Ansari Y."/>
            <person name="Arakawa T."/>
            <person name="Banh J."/>
            <person name="Banno F."/>
            <person name="Bowser L."/>
            <person name="Brooks S.Y."/>
            <person name="Carninci P."/>
            <person name="Chao Q."/>
            <person name="Choy N."/>
            <person name="Enju A."/>
            <person name="Goldsmith A.D."/>
            <person name="Gurjal M."/>
            <person name="Hansen N.F."/>
            <person name="Hayashizaki Y."/>
            <person name="Johnson-Hopson C."/>
            <person name="Hsuan V.W."/>
            <person name="Iida K."/>
            <person name="Karnes M."/>
            <person name="Khan S."/>
            <person name="Koesema E."/>
            <person name="Ishida J."/>
            <person name="Jiang P.X."/>
            <person name="Jones T."/>
            <person name="Kawai J."/>
            <person name="Kamiya A."/>
            <person name="Meyers C."/>
            <person name="Nakajima M."/>
            <person name="Narusaka M."/>
            <person name="Seki M."/>
            <person name="Sakurai T."/>
            <person name="Satou M."/>
            <person name="Tamse R."/>
            <person name="Vaysberg M."/>
            <person name="Wallender E.K."/>
            <person name="Wong C."/>
            <person name="Yamamura Y."/>
            <person name="Yuan S."/>
            <person name="Shinozaki K."/>
            <person name="Davis R.W."/>
            <person name="Theologis A."/>
            <person name="Ecker J.R."/>
        </authorList>
    </citation>
    <scope>NUCLEOTIDE SEQUENCE [LARGE SCALE MRNA]</scope>
    <source>
        <strain>cv. Columbia</strain>
    </source>
</reference>
<dbReference type="EC" id="2.4.2.18"/>
<dbReference type="EMBL" id="M96073">
    <property type="protein sequence ID" value="AAA32835.1"/>
    <property type="molecule type" value="Genomic_DNA"/>
</dbReference>
<dbReference type="EMBL" id="U58942">
    <property type="protein sequence ID" value="AAB02913.1"/>
    <property type="molecule type" value="Genomic_DNA"/>
</dbReference>
<dbReference type="EMBL" id="AB015473">
    <property type="protein sequence ID" value="BAB08398.1"/>
    <property type="molecule type" value="Genomic_DNA"/>
</dbReference>
<dbReference type="EMBL" id="CP002688">
    <property type="protein sequence ID" value="AED92493.1"/>
    <property type="molecule type" value="Genomic_DNA"/>
</dbReference>
<dbReference type="EMBL" id="AY054506">
    <property type="protein sequence ID" value="AAK96697.1"/>
    <property type="molecule type" value="mRNA"/>
</dbReference>
<dbReference type="EMBL" id="AY093298">
    <property type="protein sequence ID" value="AAM13297.1"/>
    <property type="molecule type" value="mRNA"/>
</dbReference>
<dbReference type="RefSeq" id="NP_197300.1">
    <property type="nucleotide sequence ID" value="NM_121804.5"/>
</dbReference>
<dbReference type="SMR" id="Q02166"/>
<dbReference type="BioGRID" id="16942">
    <property type="interactions" value="7"/>
</dbReference>
<dbReference type="FunCoup" id="Q02166">
    <property type="interactions" value="506"/>
</dbReference>
<dbReference type="IntAct" id="Q02166">
    <property type="interactions" value="1"/>
</dbReference>
<dbReference type="STRING" id="3702.Q02166"/>
<dbReference type="PaxDb" id="3702-AT5G17990.1"/>
<dbReference type="ProteomicsDB" id="232390"/>
<dbReference type="EnsemblPlants" id="AT5G17990.1">
    <property type="protein sequence ID" value="AT5G17990.1"/>
    <property type="gene ID" value="AT5G17990"/>
</dbReference>
<dbReference type="GeneID" id="831666"/>
<dbReference type="Gramene" id="AT5G17990.1">
    <property type="protein sequence ID" value="AT5G17990.1"/>
    <property type="gene ID" value="AT5G17990"/>
</dbReference>
<dbReference type="KEGG" id="ath:AT5G17990"/>
<dbReference type="Araport" id="AT5G17990"/>
<dbReference type="TAIR" id="AT5G17990">
    <property type="gene designation" value="TRP1"/>
</dbReference>
<dbReference type="eggNOG" id="KOG1438">
    <property type="taxonomic scope" value="Eukaryota"/>
</dbReference>
<dbReference type="HOGENOM" id="CLU_034315_4_0_1"/>
<dbReference type="InParanoid" id="Q02166"/>
<dbReference type="OMA" id="GPMTNPA"/>
<dbReference type="PhylomeDB" id="Q02166"/>
<dbReference type="BioCyc" id="ARA:AT5G17990-MONOMER"/>
<dbReference type="UniPathway" id="UPA00035">
    <property type="reaction ID" value="UER00041"/>
</dbReference>
<dbReference type="PRO" id="PR:Q02166"/>
<dbReference type="Proteomes" id="UP000006548">
    <property type="component" value="Chromosome 5"/>
</dbReference>
<dbReference type="ExpressionAtlas" id="Q02166">
    <property type="expression patterns" value="baseline and differential"/>
</dbReference>
<dbReference type="GO" id="GO:0009507">
    <property type="term" value="C:chloroplast"/>
    <property type="evidence" value="ECO:0007005"/>
    <property type="project" value="TAIR"/>
</dbReference>
<dbReference type="GO" id="GO:0009941">
    <property type="term" value="C:chloroplast envelope"/>
    <property type="evidence" value="ECO:0007005"/>
    <property type="project" value="TAIR"/>
</dbReference>
<dbReference type="GO" id="GO:0009570">
    <property type="term" value="C:chloroplast stroma"/>
    <property type="evidence" value="ECO:0007005"/>
    <property type="project" value="TAIR"/>
</dbReference>
<dbReference type="GO" id="GO:0009536">
    <property type="term" value="C:plastid"/>
    <property type="evidence" value="ECO:0007005"/>
    <property type="project" value="TAIR"/>
</dbReference>
<dbReference type="GO" id="GO:0004048">
    <property type="term" value="F:anthranilate phosphoribosyltransferase activity"/>
    <property type="evidence" value="ECO:0000304"/>
    <property type="project" value="TAIR"/>
</dbReference>
<dbReference type="GO" id="GO:0046872">
    <property type="term" value="F:metal ion binding"/>
    <property type="evidence" value="ECO:0007669"/>
    <property type="project" value="UniProtKB-KW"/>
</dbReference>
<dbReference type="GO" id="GO:0000162">
    <property type="term" value="P:L-tryptophan biosynthetic process"/>
    <property type="evidence" value="ECO:0000315"/>
    <property type="project" value="TAIR"/>
</dbReference>
<dbReference type="FunFam" id="3.40.1030.10:FF:000002">
    <property type="entry name" value="Anthranilate phosphoribosyltransferase"/>
    <property type="match status" value="1"/>
</dbReference>
<dbReference type="FunFam" id="1.20.970.10:FF:000009">
    <property type="entry name" value="Anthranilate phosphoribosyltransferase, chloroplastic"/>
    <property type="match status" value="1"/>
</dbReference>
<dbReference type="Gene3D" id="3.40.1030.10">
    <property type="entry name" value="Nucleoside phosphorylase/phosphoribosyltransferase catalytic domain"/>
    <property type="match status" value="1"/>
</dbReference>
<dbReference type="Gene3D" id="1.20.970.10">
    <property type="entry name" value="Transferase, Pyrimidine Nucleoside Phosphorylase, Chain C"/>
    <property type="match status" value="1"/>
</dbReference>
<dbReference type="HAMAP" id="MF_00211">
    <property type="entry name" value="TrpD"/>
    <property type="match status" value="1"/>
</dbReference>
<dbReference type="InterPro" id="IPR005940">
    <property type="entry name" value="Anthranilate_Pribosyl_Tfrase"/>
</dbReference>
<dbReference type="InterPro" id="IPR000312">
    <property type="entry name" value="Glycosyl_Trfase_fam3"/>
</dbReference>
<dbReference type="InterPro" id="IPR017459">
    <property type="entry name" value="Glycosyl_Trfase_fam3_N_dom"/>
</dbReference>
<dbReference type="InterPro" id="IPR036320">
    <property type="entry name" value="Glycosyl_Trfase_fam3_N_dom_sf"/>
</dbReference>
<dbReference type="InterPro" id="IPR035902">
    <property type="entry name" value="Nuc_phospho_transferase"/>
</dbReference>
<dbReference type="NCBIfam" id="TIGR01245">
    <property type="entry name" value="trpD"/>
    <property type="match status" value="1"/>
</dbReference>
<dbReference type="PANTHER" id="PTHR43285">
    <property type="entry name" value="ANTHRANILATE PHOSPHORIBOSYLTRANSFERASE"/>
    <property type="match status" value="1"/>
</dbReference>
<dbReference type="PANTHER" id="PTHR43285:SF2">
    <property type="entry name" value="ANTHRANILATE PHOSPHORIBOSYLTRANSFERASE"/>
    <property type="match status" value="1"/>
</dbReference>
<dbReference type="Pfam" id="PF02885">
    <property type="entry name" value="Glycos_trans_3N"/>
    <property type="match status" value="1"/>
</dbReference>
<dbReference type="Pfam" id="PF00591">
    <property type="entry name" value="Glycos_transf_3"/>
    <property type="match status" value="1"/>
</dbReference>
<dbReference type="SUPFAM" id="SSF52418">
    <property type="entry name" value="Nucleoside phosphorylase/phosphoribosyltransferase catalytic domain"/>
    <property type="match status" value="1"/>
</dbReference>
<dbReference type="SUPFAM" id="SSF47648">
    <property type="entry name" value="Nucleoside phosphorylase/phosphoribosyltransferase N-terminal domain"/>
    <property type="match status" value="1"/>
</dbReference>
<name>TRPD_ARATH</name>